<sequence length="731" mass="81256">MSSVLRNQDNPPTISEVSSTTKENTDNSNSKQEEKEKEKEISSTIENPTFVDDEEDNNPFSHHGEGLTSFMTANSFNEGPNTKSDKRTTKENNNSSSNNNRGDNNDDDDDDSLLLYNTSNNNKSNNVSRVNPMLKSTGEVFKTVNMNFESRVTKLLKPNTKIRIQITEAGNSNEGMSNSSKKYTVYTIKLINLEDPNNDILTRRRYSDFESLRDVLTKIFPLIVIPPIPPKNYFDFSMLNGLVGSNHENSSLSVAGSNGNSGGSGGGGASGGAGSGSGNGSIITSPKTYSYINSTHLTKGKLIEHRKRLLTNFLNNCLEIKQIRSLEFFAKFLDPNANWGDEIALIQSQLPKSIYLSNPENGLKTDPIYSNLPNPSNKNTISFFKDNKKKLTKKTNKLLSNGSENHDIGVGGGGGSIGNGGNGVNGNGTNSQSQYIANTSMLDDINKRIMENYIGLSNDYSKLGSTFNSFSLILAETTTTTTTGVSSATKKSNDNELNLIFDKIGQVFDRSYITINSLIGELETKFSEPLGEIVQYTSIIHYVAKYQSKKIKQKSMLDNEIKDKRKTLEDLLKIERESNRIENAINSQVKPKNGKYNLEQQQSSTVSPAPPPGPPPSSSSSSSSSSKFKFPSFKKITQYVSEIIDQNPEVTRKQKITNLQEKIQILEKCQNIMLADLSFITDEVNKNIQSFQKRQLKMIYKILLLYNKQLIGWAKKNIDIWEEVRDEIAKM</sequence>
<dbReference type="EMBL" id="CP017626">
    <property type="protein sequence ID" value="AOW29134.1"/>
    <property type="molecule type" value="Genomic_DNA"/>
</dbReference>
<dbReference type="RefSeq" id="XP_709938.2">
    <property type="nucleotide sequence ID" value="XM_704846.2"/>
</dbReference>
<dbReference type="FunCoup" id="Q59TN9">
    <property type="interactions" value="135"/>
</dbReference>
<dbReference type="STRING" id="237561.Q59TN9"/>
<dbReference type="EnsemblFungi" id="C4_03810W_A-T">
    <property type="protein sequence ID" value="C4_03810W_A-T-p1"/>
    <property type="gene ID" value="C4_03810W_A"/>
</dbReference>
<dbReference type="GeneID" id="3645350"/>
<dbReference type="KEGG" id="cal:CAALFM_C403810WA"/>
<dbReference type="CGD" id="CAL0000183168">
    <property type="gene designation" value="orf19.12503"/>
</dbReference>
<dbReference type="VEuPathDB" id="FungiDB:C4_03810W_A"/>
<dbReference type="eggNOG" id="KOG2273">
    <property type="taxonomic scope" value="Eukaryota"/>
</dbReference>
<dbReference type="HOGENOM" id="CLU_748017_0_0_1"/>
<dbReference type="InParanoid" id="Q59TN9"/>
<dbReference type="OMA" id="ICNTDIT"/>
<dbReference type="OrthoDB" id="289314at2759"/>
<dbReference type="PRO" id="PR:Q59TN9"/>
<dbReference type="Proteomes" id="UP000000559">
    <property type="component" value="Chromosome 4"/>
</dbReference>
<dbReference type="GO" id="GO:0010008">
    <property type="term" value="C:endosome membrane"/>
    <property type="evidence" value="ECO:0007669"/>
    <property type="project" value="UniProtKB-SubCell"/>
</dbReference>
<dbReference type="GO" id="GO:0000407">
    <property type="term" value="C:phagophore assembly site"/>
    <property type="evidence" value="ECO:0000318"/>
    <property type="project" value="GO_Central"/>
</dbReference>
<dbReference type="GO" id="GO:0034045">
    <property type="term" value="C:phagophore assembly site membrane"/>
    <property type="evidence" value="ECO:0007669"/>
    <property type="project" value="UniProtKB-SubCell"/>
</dbReference>
<dbReference type="GO" id="GO:0032266">
    <property type="term" value="F:phosphatidylinositol-3-phosphate binding"/>
    <property type="evidence" value="ECO:0000318"/>
    <property type="project" value="GO_Central"/>
</dbReference>
<dbReference type="GO" id="GO:0000422">
    <property type="term" value="P:autophagy of mitochondrion"/>
    <property type="evidence" value="ECO:0000318"/>
    <property type="project" value="GO_Central"/>
</dbReference>
<dbReference type="GO" id="GO:0015031">
    <property type="term" value="P:protein transport"/>
    <property type="evidence" value="ECO:0007669"/>
    <property type="project" value="UniProtKB-KW"/>
</dbReference>
<dbReference type="GO" id="GO:0061709">
    <property type="term" value="P:reticulophagy"/>
    <property type="evidence" value="ECO:0000318"/>
    <property type="project" value="GO_Central"/>
</dbReference>
<dbReference type="Gene3D" id="1.20.1270.60">
    <property type="entry name" value="Arfaptin homology (AH) domain/BAR domain"/>
    <property type="match status" value="1"/>
</dbReference>
<dbReference type="Gene3D" id="3.30.1520.10">
    <property type="entry name" value="Phox-like domain"/>
    <property type="match status" value="1"/>
</dbReference>
<dbReference type="InterPro" id="IPR027267">
    <property type="entry name" value="AH/BAR_dom_sf"/>
</dbReference>
<dbReference type="InterPro" id="IPR001683">
    <property type="entry name" value="PX_dom"/>
</dbReference>
<dbReference type="InterPro" id="IPR036871">
    <property type="entry name" value="PX_dom_sf"/>
</dbReference>
<dbReference type="InterPro" id="IPR051079">
    <property type="entry name" value="Sorting_Nexin_Autophagy"/>
</dbReference>
<dbReference type="PANTHER" id="PTHR46979">
    <property type="entry name" value="SORTING NEXIN-41"/>
    <property type="match status" value="1"/>
</dbReference>
<dbReference type="PANTHER" id="PTHR46979:SF2">
    <property type="entry name" value="SORTING NEXIN-41"/>
    <property type="match status" value="1"/>
</dbReference>
<dbReference type="Pfam" id="PF00787">
    <property type="entry name" value="PX"/>
    <property type="match status" value="1"/>
</dbReference>
<dbReference type="SMART" id="SM00312">
    <property type="entry name" value="PX"/>
    <property type="match status" value="1"/>
</dbReference>
<dbReference type="SUPFAM" id="SSF64268">
    <property type="entry name" value="PX domain"/>
    <property type="match status" value="1"/>
</dbReference>
<dbReference type="PROSITE" id="PS50195">
    <property type="entry name" value="PX"/>
    <property type="match status" value="1"/>
</dbReference>
<gene>
    <name type="primary">ATG20</name>
    <name type="ordered locus">CAALFM_C403810WA</name>
    <name type="ORF">CaO19.1297</name>
    <name type="ORF">CaO19.8877</name>
</gene>
<protein>
    <recommendedName>
        <fullName>Autophagy-related protein 20</fullName>
    </recommendedName>
</protein>
<keyword id="KW-0072">Autophagy</keyword>
<keyword id="KW-0967">Endosome</keyword>
<keyword id="KW-0446">Lipid-binding</keyword>
<keyword id="KW-0472">Membrane</keyword>
<keyword id="KW-0653">Protein transport</keyword>
<keyword id="KW-1185">Reference proteome</keyword>
<keyword id="KW-0813">Transport</keyword>
<feature type="chain" id="PRO_0000213820" description="Autophagy-related protein 20">
    <location>
        <begin position="1"/>
        <end position="731"/>
    </location>
</feature>
<feature type="domain" description="PX" evidence="2">
    <location>
        <begin position="164"/>
        <end position="340"/>
    </location>
</feature>
<feature type="region of interest" description="Disordered" evidence="3">
    <location>
        <begin position="1"/>
        <end position="130"/>
    </location>
</feature>
<feature type="region of interest" description="Disordered" evidence="3">
    <location>
        <begin position="253"/>
        <end position="277"/>
    </location>
</feature>
<feature type="region of interest" description="Disordered" evidence="3">
    <location>
        <begin position="586"/>
        <end position="626"/>
    </location>
</feature>
<feature type="compositionally biased region" description="Polar residues" evidence="3">
    <location>
        <begin position="1"/>
        <end position="22"/>
    </location>
</feature>
<feature type="compositionally biased region" description="Basic and acidic residues" evidence="3">
    <location>
        <begin position="31"/>
        <end position="41"/>
    </location>
</feature>
<feature type="compositionally biased region" description="Polar residues" evidence="3">
    <location>
        <begin position="69"/>
        <end position="82"/>
    </location>
</feature>
<feature type="compositionally biased region" description="Low complexity" evidence="3">
    <location>
        <begin position="92"/>
        <end position="102"/>
    </location>
</feature>
<feature type="compositionally biased region" description="Low complexity" evidence="3">
    <location>
        <begin position="113"/>
        <end position="128"/>
    </location>
</feature>
<feature type="compositionally biased region" description="Gly residues" evidence="3">
    <location>
        <begin position="259"/>
        <end position="277"/>
    </location>
</feature>
<feature type="compositionally biased region" description="Pro residues" evidence="3">
    <location>
        <begin position="608"/>
        <end position="617"/>
    </location>
</feature>
<feature type="binding site" evidence="1">
    <location>
        <position position="205"/>
    </location>
    <ligand>
        <name>a 1,2-diacyl-sn-glycero-3-phospho-(1D-myo-inositol-3-phosphate)</name>
        <dbReference type="ChEBI" id="CHEBI:58088"/>
    </ligand>
</feature>
<feature type="binding site" evidence="1">
    <location>
        <position position="207"/>
    </location>
    <ligand>
        <name>a 1,2-diacyl-sn-glycero-3-phospho-(1D-myo-inositol-3-phosphate)</name>
        <dbReference type="ChEBI" id="CHEBI:58088"/>
    </ligand>
</feature>
<feature type="binding site" evidence="1">
    <location>
        <position position="231"/>
    </location>
    <ligand>
        <name>a 1,2-diacyl-sn-glycero-3-phospho-(1D-myo-inositol-3-phosphate)</name>
        <dbReference type="ChEBI" id="CHEBI:58088"/>
    </ligand>
</feature>
<feature type="binding site" evidence="1">
    <location>
        <position position="306"/>
    </location>
    <ligand>
        <name>a 1,2-diacyl-sn-glycero-3-phospho-(1D-myo-inositol-3-phosphate)</name>
        <dbReference type="ChEBI" id="CHEBI:58088"/>
    </ligand>
</feature>
<proteinExistence type="inferred from homology"/>
<evidence type="ECO:0000250" key="1"/>
<evidence type="ECO:0000255" key="2">
    <source>
        <dbReference type="PROSITE-ProRule" id="PRU00147"/>
    </source>
</evidence>
<evidence type="ECO:0000256" key="3">
    <source>
        <dbReference type="SAM" id="MobiDB-lite"/>
    </source>
</evidence>
<evidence type="ECO:0000305" key="4"/>
<accession>Q59TN9</accession>
<accession>A0A1D8PLW6</accession>
<comment type="function">
    <text evidence="1">Required for cytoplasm to vacuole transport (Cvt), pexophagy and mitophagy. Also involved in endoplasmic reticulum-specific autophagic process and is essential for the survival of cells subjected to severe ER stress. Functions in protein retrieval from the endocytic pathway (By similarity).</text>
</comment>
<comment type="subcellular location">
    <subcellularLocation>
        <location evidence="1">Endosome membrane</location>
        <topology evidence="1">Peripheral membrane protein</topology>
    </subcellularLocation>
    <subcellularLocation>
        <location evidence="1">Preautophagosomal structure membrane</location>
        <topology evidence="1">Peripheral membrane protein</topology>
    </subcellularLocation>
</comment>
<comment type="domain">
    <text evidence="1">The PX domain binds phosphatidylinositol 3-phosphate which is necessary for peripheral membrane localization to the perivacuolar punctate structures.</text>
</comment>
<comment type="similarity">
    <text evidence="4">Belongs to the sorting nexin family.</text>
</comment>
<organism>
    <name type="scientific">Candida albicans (strain SC5314 / ATCC MYA-2876)</name>
    <name type="common">Yeast</name>
    <dbReference type="NCBI Taxonomy" id="237561"/>
    <lineage>
        <taxon>Eukaryota</taxon>
        <taxon>Fungi</taxon>
        <taxon>Dikarya</taxon>
        <taxon>Ascomycota</taxon>
        <taxon>Saccharomycotina</taxon>
        <taxon>Pichiomycetes</taxon>
        <taxon>Debaryomycetaceae</taxon>
        <taxon>Candida/Lodderomyces clade</taxon>
        <taxon>Candida</taxon>
    </lineage>
</organism>
<reference key="1">
    <citation type="journal article" date="2004" name="Proc. Natl. Acad. Sci. U.S.A.">
        <title>The diploid genome sequence of Candida albicans.</title>
        <authorList>
            <person name="Jones T."/>
            <person name="Federspiel N.A."/>
            <person name="Chibana H."/>
            <person name="Dungan J."/>
            <person name="Kalman S."/>
            <person name="Magee B.B."/>
            <person name="Newport G."/>
            <person name="Thorstenson Y.R."/>
            <person name="Agabian N."/>
            <person name="Magee P.T."/>
            <person name="Davis R.W."/>
            <person name="Scherer S."/>
        </authorList>
    </citation>
    <scope>NUCLEOTIDE SEQUENCE [LARGE SCALE GENOMIC DNA]</scope>
    <source>
        <strain>SC5314 / ATCC MYA-2876</strain>
    </source>
</reference>
<reference key="2">
    <citation type="journal article" date="2007" name="Genome Biol.">
        <title>Assembly of the Candida albicans genome into sixteen supercontigs aligned on the eight chromosomes.</title>
        <authorList>
            <person name="van het Hoog M."/>
            <person name="Rast T.J."/>
            <person name="Martchenko M."/>
            <person name="Grindle S."/>
            <person name="Dignard D."/>
            <person name="Hogues H."/>
            <person name="Cuomo C."/>
            <person name="Berriman M."/>
            <person name="Scherer S."/>
            <person name="Magee B.B."/>
            <person name="Whiteway M."/>
            <person name="Chibana H."/>
            <person name="Nantel A."/>
            <person name="Magee P.T."/>
        </authorList>
    </citation>
    <scope>GENOME REANNOTATION</scope>
    <source>
        <strain>SC5314 / ATCC MYA-2876</strain>
    </source>
</reference>
<reference key="3">
    <citation type="journal article" date="2013" name="Genome Biol.">
        <title>Assembly of a phased diploid Candida albicans genome facilitates allele-specific measurements and provides a simple model for repeat and indel structure.</title>
        <authorList>
            <person name="Muzzey D."/>
            <person name="Schwartz K."/>
            <person name="Weissman J.S."/>
            <person name="Sherlock G."/>
        </authorList>
    </citation>
    <scope>NUCLEOTIDE SEQUENCE [LARGE SCALE GENOMIC DNA]</scope>
    <scope>GENOME REANNOTATION</scope>
    <source>
        <strain>SC5314 / ATCC MYA-2876</strain>
    </source>
</reference>
<name>ATG20_CANAL</name>